<dbReference type="EC" id="3.6.4.13"/>
<dbReference type="EMBL" id="AP006529">
    <property type="protein sequence ID" value="BAC84904.1"/>
    <property type="molecule type" value="Genomic_DNA"/>
</dbReference>
<dbReference type="EMBL" id="AP008213">
    <property type="protein sequence ID" value="BAF21338.1"/>
    <property type="molecule type" value="Genomic_DNA"/>
</dbReference>
<dbReference type="EMBL" id="AP014963">
    <property type="protein sequence ID" value="BAT01081.1"/>
    <property type="molecule type" value="Genomic_DNA"/>
</dbReference>
<dbReference type="EMBL" id="AB110202">
    <property type="protein sequence ID" value="BAC78594.1"/>
    <property type="molecule type" value="mRNA"/>
</dbReference>
<dbReference type="RefSeq" id="XP_015647459.1">
    <property type="nucleotide sequence ID" value="XM_015791973.1"/>
</dbReference>
<dbReference type="SMR" id="Q6YS30"/>
<dbReference type="FunCoup" id="Q6YS30">
    <property type="interactions" value="958"/>
</dbReference>
<dbReference type="STRING" id="39947.Q6YS30"/>
<dbReference type="iPTMnet" id="Q6YS30"/>
<dbReference type="PaxDb" id="39947-Q6YS30"/>
<dbReference type="EnsemblPlants" id="Os07t0301200-01">
    <property type="protein sequence ID" value="Os07t0301200-01"/>
    <property type="gene ID" value="Os07g0301200"/>
</dbReference>
<dbReference type="Gramene" id="Os07t0301200-01">
    <property type="protein sequence ID" value="Os07t0301200-01"/>
    <property type="gene ID" value="Os07g0301200"/>
</dbReference>
<dbReference type="KEGG" id="dosa:Os07g0301200"/>
<dbReference type="eggNOG" id="KOG0331">
    <property type="taxonomic scope" value="Eukaryota"/>
</dbReference>
<dbReference type="InParanoid" id="Q6YS30"/>
<dbReference type="OMA" id="KKTHDMY"/>
<dbReference type="OrthoDB" id="196131at2759"/>
<dbReference type="Proteomes" id="UP000000763">
    <property type="component" value="Chromosome 7"/>
</dbReference>
<dbReference type="Proteomes" id="UP000059680">
    <property type="component" value="Chromosome 7"/>
</dbReference>
<dbReference type="ExpressionAtlas" id="Q6YS30">
    <property type="expression patterns" value="baseline and differential"/>
</dbReference>
<dbReference type="GO" id="GO:0005730">
    <property type="term" value="C:nucleolus"/>
    <property type="evidence" value="ECO:0000318"/>
    <property type="project" value="GO_Central"/>
</dbReference>
<dbReference type="GO" id="GO:0005524">
    <property type="term" value="F:ATP binding"/>
    <property type="evidence" value="ECO:0007669"/>
    <property type="project" value="UniProtKB-KW"/>
</dbReference>
<dbReference type="GO" id="GO:0016887">
    <property type="term" value="F:ATP hydrolysis activity"/>
    <property type="evidence" value="ECO:0007669"/>
    <property type="project" value="RHEA"/>
</dbReference>
<dbReference type="GO" id="GO:0003729">
    <property type="term" value="F:mRNA binding"/>
    <property type="evidence" value="ECO:0000318"/>
    <property type="project" value="GO_Central"/>
</dbReference>
<dbReference type="GO" id="GO:0003724">
    <property type="term" value="F:RNA helicase activity"/>
    <property type="evidence" value="ECO:0000318"/>
    <property type="project" value="GO_Central"/>
</dbReference>
<dbReference type="GO" id="GO:0006364">
    <property type="term" value="P:rRNA processing"/>
    <property type="evidence" value="ECO:0000318"/>
    <property type="project" value="GO_Central"/>
</dbReference>
<dbReference type="CDD" id="cd00268">
    <property type="entry name" value="DEADc"/>
    <property type="match status" value="1"/>
</dbReference>
<dbReference type="CDD" id="cd18787">
    <property type="entry name" value="SF2_C_DEAD"/>
    <property type="match status" value="1"/>
</dbReference>
<dbReference type="FunFam" id="3.40.50.300:FF:000008">
    <property type="entry name" value="ATP-dependent RNA helicase RhlB"/>
    <property type="match status" value="1"/>
</dbReference>
<dbReference type="Gene3D" id="3.40.50.300">
    <property type="entry name" value="P-loop containing nucleotide triphosphate hydrolases"/>
    <property type="match status" value="2"/>
</dbReference>
<dbReference type="InterPro" id="IPR011545">
    <property type="entry name" value="DEAD/DEAH_box_helicase_dom"/>
</dbReference>
<dbReference type="InterPro" id="IPR014001">
    <property type="entry name" value="Helicase_ATP-bd"/>
</dbReference>
<dbReference type="InterPro" id="IPR001650">
    <property type="entry name" value="Helicase_C-like"/>
</dbReference>
<dbReference type="InterPro" id="IPR027417">
    <property type="entry name" value="P-loop_NTPase"/>
</dbReference>
<dbReference type="InterPro" id="IPR000629">
    <property type="entry name" value="RNA-helicase_DEAD-box_CS"/>
</dbReference>
<dbReference type="PANTHER" id="PTHR47958">
    <property type="entry name" value="ATP-DEPENDENT RNA HELICASE DBP3"/>
    <property type="match status" value="1"/>
</dbReference>
<dbReference type="Pfam" id="PF00270">
    <property type="entry name" value="DEAD"/>
    <property type="match status" value="1"/>
</dbReference>
<dbReference type="Pfam" id="PF00271">
    <property type="entry name" value="Helicase_C"/>
    <property type="match status" value="1"/>
</dbReference>
<dbReference type="SMART" id="SM00487">
    <property type="entry name" value="DEXDc"/>
    <property type="match status" value="1"/>
</dbReference>
<dbReference type="SMART" id="SM00490">
    <property type="entry name" value="HELICc"/>
    <property type="match status" value="1"/>
</dbReference>
<dbReference type="SUPFAM" id="SSF52540">
    <property type="entry name" value="P-loop containing nucleoside triphosphate hydrolases"/>
    <property type="match status" value="1"/>
</dbReference>
<dbReference type="PROSITE" id="PS00039">
    <property type="entry name" value="DEAD_ATP_HELICASE"/>
    <property type="match status" value="1"/>
</dbReference>
<dbReference type="PROSITE" id="PS51192">
    <property type="entry name" value="HELICASE_ATP_BIND_1"/>
    <property type="match status" value="1"/>
</dbReference>
<dbReference type="PROSITE" id="PS51194">
    <property type="entry name" value="HELICASE_CTER"/>
    <property type="match status" value="1"/>
</dbReference>
<dbReference type="PROSITE" id="PS51195">
    <property type="entry name" value="Q_MOTIF"/>
    <property type="match status" value="1"/>
</dbReference>
<reference key="1">
    <citation type="journal article" date="2005" name="Nature">
        <title>The map-based sequence of the rice genome.</title>
        <authorList>
            <consortium name="International rice genome sequencing project (IRGSP)"/>
        </authorList>
    </citation>
    <scope>NUCLEOTIDE SEQUENCE [LARGE SCALE GENOMIC DNA]</scope>
    <source>
        <strain>cv. Nipponbare</strain>
    </source>
</reference>
<reference key="2">
    <citation type="journal article" date="2008" name="Nucleic Acids Res.">
        <title>The rice annotation project database (RAP-DB): 2008 update.</title>
        <authorList>
            <consortium name="The rice annotation project (RAP)"/>
        </authorList>
    </citation>
    <scope>GENOME REANNOTATION</scope>
    <source>
        <strain>cv. Nipponbare</strain>
    </source>
</reference>
<reference key="3">
    <citation type="journal article" date="2013" name="Rice">
        <title>Improvement of the Oryza sativa Nipponbare reference genome using next generation sequence and optical map data.</title>
        <authorList>
            <person name="Kawahara Y."/>
            <person name="de la Bastide M."/>
            <person name="Hamilton J.P."/>
            <person name="Kanamori H."/>
            <person name="McCombie W.R."/>
            <person name="Ouyang S."/>
            <person name="Schwartz D.C."/>
            <person name="Tanaka T."/>
            <person name="Wu J."/>
            <person name="Zhou S."/>
            <person name="Childs K.L."/>
            <person name="Davidson R.M."/>
            <person name="Lin H."/>
            <person name="Quesada-Ocampo L."/>
            <person name="Vaillancourt B."/>
            <person name="Sakai H."/>
            <person name="Lee S.S."/>
            <person name="Kim J."/>
            <person name="Numa H."/>
            <person name="Itoh T."/>
            <person name="Buell C.R."/>
            <person name="Matsumoto T."/>
        </authorList>
    </citation>
    <scope>GENOME REANNOTATION</scope>
    <source>
        <strain>cv. Nipponbare</strain>
    </source>
</reference>
<reference key="4">
    <citation type="journal article" date="2005" name="Plant Cell">
        <title>Functional isolation of novel nuclear proteins showing a variety of subnuclear localizations.</title>
        <authorList>
            <person name="Moriguchi K."/>
            <person name="Suzuki T."/>
            <person name="Ito Y."/>
            <person name="Yamazaki Y."/>
            <person name="Niwa Y."/>
            <person name="Kurata N."/>
        </authorList>
    </citation>
    <scope>NUCLEOTIDE SEQUENCE [MRNA] OF 105-512</scope>
    <scope>SUBCELLULAR LOCATION</scope>
    <source>
        <tissue>Panicle</tissue>
    </source>
</reference>
<sequence length="512" mass="55623">MGRSMLPEQQEDVSRKSKKEKKSKKDKKRKLEAEAEVVVVEAAAATSTDEATKSSKKKRAKGDLGQGEEAENGGGKVVAVTGKGSADAKYAPLSSFAATALPPQVLDCCKGFERPSPIQAYAWPYLLDGRDFIGIAATGSGKTIAFGVPALMHVRRKMGEKSAKKGVPRVLVLSPTRELAQQIADVLCEAGAPCGISSVCLYGGTSKGPQISALKSGVDIVIGTPGRMKDLIEMGICRLNDVSFVVLDEADRMLDMGFEPEVRAILSQTASVRQTVMFSATWPPAVHQLAQEFMDPNPIKVVIGSEDLAANHDVMQIVEVLDDRSRDSRLVALLDKYHKAQRNRVLVFVLYKREATRVETMLQRRGWSAVSVHGDKAQHDRTKALSLFKEGSCPLMIATDVASRGLDIPDVEVVINYSYPLTTEDYVHRIGRTGRAGKKGVAHTFFTQENKGLAGELVNVLREAGQVVPPALTKFGTHVKKKESQIYGSHFKEIKADAPKSTKITFGDSDED</sequence>
<accession>Q6YS30</accession>
<accession>A0A0P0X5C0</accession>
<accession>Q7XXP9</accession>
<evidence type="ECO:0000250" key="1"/>
<evidence type="ECO:0000255" key="2"/>
<evidence type="ECO:0000255" key="3">
    <source>
        <dbReference type="PROSITE-ProRule" id="PRU00541"/>
    </source>
</evidence>
<evidence type="ECO:0000255" key="4">
    <source>
        <dbReference type="PROSITE-ProRule" id="PRU00542"/>
    </source>
</evidence>
<evidence type="ECO:0000256" key="5">
    <source>
        <dbReference type="SAM" id="MobiDB-lite"/>
    </source>
</evidence>
<evidence type="ECO:0000305" key="6"/>
<proteinExistence type="evidence at transcript level"/>
<comment type="function">
    <text evidence="1">ATP-dependent RNA helicase required for 60S ribosomal subunit synthesis. Involved in efficient pre-rRNA processing, predominantly at site A3, which is necessary for the normal formation of 25S and 5.8S rRNAs (By similarity).</text>
</comment>
<comment type="catalytic activity">
    <reaction>
        <text>ATP + H2O = ADP + phosphate + H(+)</text>
        <dbReference type="Rhea" id="RHEA:13065"/>
        <dbReference type="ChEBI" id="CHEBI:15377"/>
        <dbReference type="ChEBI" id="CHEBI:15378"/>
        <dbReference type="ChEBI" id="CHEBI:30616"/>
        <dbReference type="ChEBI" id="CHEBI:43474"/>
        <dbReference type="ChEBI" id="CHEBI:456216"/>
        <dbReference type="EC" id="3.6.4.13"/>
    </reaction>
</comment>
<comment type="subcellular location">
    <subcellularLocation>
        <location evidence="1">Nucleus</location>
        <location evidence="1">Nucleolus</location>
    </subcellularLocation>
</comment>
<comment type="domain">
    <text>The Q motif is unique to and characteristic of the DEAD box family of RNA helicases and controls ATP binding and hydrolysis.</text>
</comment>
<comment type="similarity">
    <text evidence="6">Belongs to the DEAD box helicase family. DDX5/DBP2 subfamily.</text>
</comment>
<protein>
    <recommendedName>
        <fullName>DEAD-box ATP-dependent RNA helicase 5</fullName>
        <ecNumber>3.6.4.13</ecNumber>
    </recommendedName>
</protein>
<feature type="chain" id="PRO_0000282453" description="DEAD-box ATP-dependent RNA helicase 5">
    <location>
        <begin position="1"/>
        <end position="512"/>
    </location>
</feature>
<feature type="domain" description="Helicase ATP-binding" evidence="3">
    <location>
        <begin position="123"/>
        <end position="300"/>
    </location>
</feature>
<feature type="domain" description="Helicase C-terminal" evidence="4">
    <location>
        <begin position="333"/>
        <end position="476"/>
    </location>
</feature>
<feature type="region of interest" description="Disordered" evidence="5">
    <location>
        <begin position="1"/>
        <end position="33"/>
    </location>
</feature>
<feature type="region of interest" description="Disordered" evidence="5">
    <location>
        <begin position="45"/>
        <end position="76"/>
    </location>
</feature>
<feature type="coiled-coil region" evidence="2">
    <location>
        <begin position="14"/>
        <end position="45"/>
    </location>
</feature>
<feature type="short sequence motif" description="Q motif">
    <location>
        <begin position="94"/>
        <end position="120"/>
    </location>
</feature>
<feature type="short sequence motif" description="DEAD box">
    <location>
        <begin position="248"/>
        <end position="251"/>
    </location>
</feature>
<feature type="compositionally biased region" description="Basic residues" evidence="5">
    <location>
        <begin position="16"/>
        <end position="30"/>
    </location>
</feature>
<feature type="binding site" evidence="3">
    <location>
        <begin position="136"/>
        <end position="143"/>
    </location>
    <ligand>
        <name>ATP</name>
        <dbReference type="ChEBI" id="CHEBI:30616"/>
    </ligand>
</feature>
<organism>
    <name type="scientific">Oryza sativa subsp. japonica</name>
    <name type="common">Rice</name>
    <dbReference type="NCBI Taxonomy" id="39947"/>
    <lineage>
        <taxon>Eukaryota</taxon>
        <taxon>Viridiplantae</taxon>
        <taxon>Streptophyta</taxon>
        <taxon>Embryophyta</taxon>
        <taxon>Tracheophyta</taxon>
        <taxon>Spermatophyta</taxon>
        <taxon>Magnoliopsida</taxon>
        <taxon>Liliopsida</taxon>
        <taxon>Poales</taxon>
        <taxon>Poaceae</taxon>
        <taxon>BOP clade</taxon>
        <taxon>Oryzoideae</taxon>
        <taxon>Oryzeae</taxon>
        <taxon>Oryzinae</taxon>
        <taxon>Oryza</taxon>
        <taxon>Oryza sativa</taxon>
    </lineage>
</organism>
<keyword id="KW-0067">ATP-binding</keyword>
<keyword id="KW-0175">Coiled coil</keyword>
<keyword id="KW-0347">Helicase</keyword>
<keyword id="KW-0378">Hydrolase</keyword>
<keyword id="KW-0547">Nucleotide-binding</keyword>
<keyword id="KW-0539">Nucleus</keyword>
<keyword id="KW-1185">Reference proteome</keyword>
<keyword id="KW-0690">Ribosome biogenesis</keyword>
<keyword id="KW-0694">RNA-binding</keyword>
<keyword id="KW-0698">rRNA processing</keyword>
<gene>
    <name type="ordered locus">Os07g0301200</name>
    <name type="ordered locus">LOC_Os07g20580</name>
    <name type="ORF">B1114D08.16-1</name>
</gene>
<name>RH5_ORYSJ</name>